<feature type="chain" id="PRO_1000116596" description="LexA repressor">
    <location>
        <begin position="1"/>
        <end position="241"/>
    </location>
</feature>
<feature type="DNA-binding region" description="H-T-H motif" evidence="1">
    <location>
        <begin position="41"/>
        <end position="61"/>
    </location>
</feature>
<feature type="active site" description="For autocatalytic cleavage activity" evidence="1">
    <location>
        <position position="165"/>
    </location>
</feature>
<feature type="active site" description="For autocatalytic cleavage activity" evidence="1">
    <location>
        <position position="202"/>
    </location>
</feature>
<feature type="site" description="Cleavage; by autolysis" evidence="1">
    <location>
        <begin position="130"/>
        <end position="131"/>
    </location>
</feature>
<comment type="function">
    <text evidence="1">Represses a number of genes involved in the response to DNA damage (SOS response), including recA and lexA. In the presence of single-stranded DNA, RecA interacts with LexA causing an autocatalytic cleavage which disrupts the DNA-binding part of LexA, leading to derepression of the SOS regulon and eventually DNA repair.</text>
</comment>
<comment type="catalytic activity">
    <reaction evidence="1">
        <text>Hydrolysis of Ala-|-Gly bond in repressor LexA.</text>
        <dbReference type="EC" id="3.4.21.88"/>
    </reaction>
</comment>
<comment type="subunit">
    <text evidence="1">Homodimer.</text>
</comment>
<comment type="similarity">
    <text evidence="1">Belongs to the peptidase S24 family.</text>
</comment>
<keyword id="KW-0068">Autocatalytic cleavage</keyword>
<keyword id="KW-0227">DNA damage</keyword>
<keyword id="KW-0234">DNA repair</keyword>
<keyword id="KW-0235">DNA replication</keyword>
<keyword id="KW-0238">DNA-binding</keyword>
<keyword id="KW-0378">Hydrolase</keyword>
<keyword id="KW-0678">Repressor</keyword>
<keyword id="KW-0742">SOS response</keyword>
<keyword id="KW-0804">Transcription</keyword>
<keyword id="KW-0805">Transcription regulation</keyword>
<name>LEXA_BIFLS</name>
<accession>B7GQ64</accession>
<accession>E8MR26</accession>
<reference key="1">
    <citation type="journal article" date="2008" name="Proc. Natl. Acad. Sci. U.S.A.">
        <title>The genome sequence of Bifidobacterium longum subsp. infantis reveals adaptations for milk utilization within the infant microbiome.</title>
        <authorList>
            <person name="Sela D.A."/>
            <person name="Chapman J."/>
            <person name="Adeuya A."/>
            <person name="Kim J.H."/>
            <person name="Chen F."/>
            <person name="Whitehead T.R."/>
            <person name="Lapidus A."/>
            <person name="Rokhsar D.S."/>
            <person name="Lebrilla C.B."/>
            <person name="German J.B."/>
            <person name="Price N.P."/>
            <person name="Richardson P.M."/>
            <person name="Mills D.A."/>
        </authorList>
    </citation>
    <scope>NUCLEOTIDE SEQUENCE [LARGE SCALE GENOMIC DNA]</scope>
    <source>
        <strain>ATCC 15697 / DSM 20088 / JCM 1222 / NCTC 11817 / S12</strain>
    </source>
</reference>
<reference key="2">
    <citation type="journal article" date="2011" name="Nature">
        <title>Bifidobacteria can protect from enteropathogenic infection through production of acetate.</title>
        <authorList>
            <person name="Fukuda S."/>
            <person name="Toh H."/>
            <person name="Hase K."/>
            <person name="Oshima K."/>
            <person name="Nakanishi Y."/>
            <person name="Yoshimura K."/>
            <person name="Tobe T."/>
            <person name="Clarke J.M."/>
            <person name="Topping D.L."/>
            <person name="Suzuki T."/>
            <person name="Taylor T.D."/>
            <person name="Itoh K."/>
            <person name="Kikuchi J."/>
            <person name="Morita H."/>
            <person name="Hattori M."/>
            <person name="Ohno H."/>
        </authorList>
    </citation>
    <scope>NUCLEOTIDE SEQUENCE [LARGE SCALE GENOMIC DNA]</scope>
    <source>
        <strain>ATCC 15697 / DSM 20088 / JCM 1222 / NCTC 11817 / S12</strain>
    </source>
</reference>
<protein>
    <recommendedName>
        <fullName evidence="1">LexA repressor</fullName>
        <ecNumber evidence="1">3.4.21.88</ecNumber>
    </recommendedName>
</protein>
<evidence type="ECO:0000255" key="1">
    <source>
        <dbReference type="HAMAP-Rule" id="MF_00015"/>
    </source>
</evidence>
<sequence>MSTIPFSPKQKPDESTLTDRQRKVLDAIRTHIDEQGFAPSFREIGNAAGLKSPSSVKHQLQVLEDKGFIRMNANKGRAIEVVAGSAPNPEKPSQASEEATSTSNVAEIYQFPAEAIAESHDVPLVGRIAAGVPITAEQHVDDVMRLPERLTGSGTLFMLEVHGDSMVDAAICDGDYVVVREQNSAVNGDIVAALLDDEATVKTFRKENGHVWLMPHNPAYSPIDGTHATIMGKVVTVLRKL</sequence>
<organism>
    <name type="scientific">Bifidobacterium longum subsp. infantis (strain ATCC 15697 / DSM 20088 / JCM 1222 / NCTC 11817 / S12)</name>
    <dbReference type="NCBI Taxonomy" id="391904"/>
    <lineage>
        <taxon>Bacteria</taxon>
        <taxon>Bacillati</taxon>
        <taxon>Actinomycetota</taxon>
        <taxon>Actinomycetes</taxon>
        <taxon>Bifidobacteriales</taxon>
        <taxon>Bifidobacteriaceae</taxon>
        <taxon>Bifidobacterium</taxon>
    </lineage>
</organism>
<proteinExistence type="inferred from homology"/>
<dbReference type="EC" id="3.4.21.88" evidence="1"/>
<dbReference type="EMBL" id="CP001095">
    <property type="protein sequence ID" value="ACJ51944.1"/>
    <property type="molecule type" value="Genomic_DNA"/>
</dbReference>
<dbReference type="EMBL" id="AP010889">
    <property type="protein sequence ID" value="BAJ68451.1"/>
    <property type="molecule type" value="Genomic_DNA"/>
</dbReference>
<dbReference type="RefSeq" id="WP_012577217.1">
    <property type="nucleotide sequence ID" value="NC_011593.1"/>
</dbReference>
<dbReference type="SMR" id="B7GQ64"/>
<dbReference type="MEROPS" id="S24.001"/>
<dbReference type="KEGG" id="bln:Blon_0842"/>
<dbReference type="KEGG" id="blon:BLIJ_0859"/>
<dbReference type="PATRIC" id="fig|391904.8.peg.866"/>
<dbReference type="HOGENOM" id="CLU_066192_45_0_11"/>
<dbReference type="Proteomes" id="UP000001360">
    <property type="component" value="Chromosome"/>
</dbReference>
<dbReference type="GO" id="GO:0003677">
    <property type="term" value="F:DNA binding"/>
    <property type="evidence" value="ECO:0007669"/>
    <property type="project" value="UniProtKB-UniRule"/>
</dbReference>
<dbReference type="GO" id="GO:0004252">
    <property type="term" value="F:serine-type endopeptidase activity"/>
    <property type="evidence" value="ECO:0007669"/>
    <property type="project" value="UniProtKB-UniRule"/>
</dbReference>
<dbReference type="GO" id="GO:0006281">
    <property type="term" value="P:DNA repair"/>
    <property type="evidence" value="ECO:0007669"/>
    <property type="project" value="UniProtKB-UniRule"/>
</dbReference>
<dbReference type="GO" id="GO:0006260">
    <property type="term" value="P:DNA replication"/>
    <property type="evidence" value="ECO:0007669"/>
    <property type="project" value="UniProtKB-UniRule"/>
</dbReference>
<dbReference type="GO" id="GO:0045892">
    <property type="term" value="P:negative regulation of DNA-templated transcription"/>
    <property type="evidence" value="ECO:0007669"/>
    <property type="project" value="UniProtKB-UniRule"/>
</dbReference>
<dbReference type="GO" id="GO:0006508">
    <property type="term" value="P:proteolysis"/>
    <property type="evidence" value="ECO:0007669"/>
    <property type="project" value="InterPro"/>
</dbReference>
<dbReference type="GO" id="GO:0009432">
    <property type="term" value="P:SOS response"/>
    <property type="evidence" value="ECO:0007669"/>
    <property type="project" value="UniProtKB-UniRule"/>
</dbReference>
<dbReference type="CDD" id="cd06529">
    <property type="entry name" value="S24_LexA-like"/>
    <property type="match status" value="1"/>
</dbReference>
<dbReference type="FunFam" id="1.10.10.10:FF:000009">
    <property type="entry name" value="LexA repressor"/>
    <property type="match status" value="1"/>
</dbReference>
<dbReference type="FunFam" id="2.10.109.10:FF:000001">
    <property type="entry name" value="LexA repressor"/>
    <property type="match status" value="1"/>
</dbReference>
<dbReference type="Gene3D" id="2.10.109.10">
    <property type="entry name" value="Umud Fragment, subunit A"/>
    <property type="match status" value="1"/>
</dbReference>
<dbReference type="Gene3D" id="1.10.10.10">
    <property type="entry name" value="Winged helix-like DNA-binding domain superfamily/Winged helix DNA-binding domain"/>
    <property type="match status" value="1"/>
</dbReference>
<dbReference type="HAMAP" id="MF_00015">
    <property type="entry name" value="LexA"/>
    <property type="match status" value="1"/>
</dbReference>
<dbReference type="InterPro" id="IPR006200">
    <property type="entry name" value="LexA"/>
</dbReference>
<dbReference type="InterPro" id="IPR039418">
    <property type="entry name" value="LexA-like"/>
</dbReference>
<dbReference type="InterPro" id="IPR036286">
    <property type="entry name" value="LexA/Signal_pep-like_sf"/>
</dbReference>
<dbReference type="InterPro" id="IPR006199">
    <property type="entry name" value="LexA_DNA-bd_dom"/>
</dbReference>
<dbReference type="InterPro" id="IPR050077">
    <property type="entry name" value="LexA_repressor"/>
</dbReference>
<dbReference type="InterPro" id="IPR006197">
    <property type="entry name" value="Peptidase_S24_LexA"/>
</dbReference>
<dbReference type="InterPro" id="IPR015927">
    <property type="entry name" value="Peptidase_S24_S26A/B/C"/>
</dbReference>
<dbReference type="InterPro" id="IPR036388">
    <property type="entry name" value="WH-like_DNA-bd_sf"/>
</dbReference>
<dbReference type="InterPro" id="IPR036390">
    <property type="entry name" value="WH_DNA-bd_sf"/>
</dbReference>
<dbReference type="NCBIfam" id="TIGR00498">
    <property type="entry name" value="lexA"/>
    <property type="match status" value="1"/>
</dbReference>
<dbReference type="PANTHER" id="PTHR33516">
    <property type="entry name" value="LEXA REPRESSOR"/>
    <property type="match status" value="1"/>
</dbReference>
<dbReference type="PANTHER" id="PTHR33516:SF2">
    <property type="entry name" value="LEXA REPRESSOR-RELATED"/>
    <property type="match status" value="1"/>
</dbReference>
<dbReference type="Pfam" id="PF01726">
    <property type="entry name" value="LexA_DNA_bind"/>
    <property type="match status" value="1"/>
</dbReference>
<dbReference type="Pfam" id="PF00717">
    <property type="entry name" value="Peptidase_S24"/>
    <property type="match status" value="1"/>
</dbReference>
<dbReference type="PRINTS" id="PR00726">
    <property type="entry name" value="LEXASERPTASE"/>
</dbReference>
<dbReference type="SUPFAM" id="SSF51306">
    <property type="entry name" value="LexA/Signal peptidase"/>
    <property type="match status" value="1"/>
</dbReference>
<dbReference type="SUPFAM" id="SSF46785">
    <property type="entry name" value="Winged helix' DNA-binding domain"/>
    <property type="match status" value="1"/>
</dbReference>
<gene>
    <name evidence="1" type="primary">lexA</name>
    <name type="ordered locus">Blon_0842</name>
    <name type="ordered locus">BLIJ_0859</name>
</gene>